<dbReference type="EMBL" id="CP001114">
    <property type="protein sequence ID" value="ACO45309.1"/>
    <property type="molecule type" value="Genomic_DNA"/>
</dbReference>
<dbReference type="RefSeq" id="WP_012692432.1">
    <property type="nucleotide sequence ID" value="NC_012526.1"/>
</dbReference>
<dbReference type="SMR" id="C1D0D5"/>
<dbReference type="STRING" id="546414.Deide_04740"/>
<dbReference type="PaxDb" id="546414-Deide_04740"/>
<dbReference type="KEGG" id="ddr:Deide_04740"/>
<dbReference type="eggNOG" id="COG1327">
    <property type="taxonomic scope" value="Bacteria"/>
</dbReference>
<dbReference type="HOGENOM" id="CLU_108412_0_0_0"/>
<dbReference type="OrthoDB" id="9807461at2"/>
<dbReference type="Proteomes" id="UP000002208">
    <property type="component" value="Chromosome"/>
</dbReference>
<dbReference type="GO" id="GO:0005524">
    <property type="term" value="F:ATP binding"/>
    <property type="evidence" value="ECO:0007669"/>
    <property type="project" value="UniProtKB-KW"/>
</dbReference>
<dbReference type="GO" id="GO:0003677">
    <property type="term" value="F:DNA binding"/>
    <property type="evidence" value="ECO:0007669"/>
    <property type="project" value="UniProtKB-KW"/>
</dbReference>
<dbReference type="GO" id="GO:0008270">
    <property type="term" value="F:zinc ion binding"/>
    <property type="evidence" value="ECO:0007669"/>
    <property type="project" value="UniProtKB-UniRule"/>
</dbReference>
<dbReference type="GO" id="GO:0045892">
    <property type="term" value="P:negative regulation of DNA-templated transcription"/>
    <property type="evidence" value="ECO:0007669"/>
    <property type="project" value="UniProtKB-UniRule"/>
</dbReference>
<dbReference type="HAMAP" id="MF_00440">
    <property type="entry name" value="NrdR"/>
    <property type="match status" value="1"/>
</dbReference>
<dbReference type="InterPro" id="IPR005144">
    <property type="entry name" value="ATP-cone_dom"/>
</dbReference>
<dbReference type="InterPro" id="IPR055173">
    <property type="entry name" value="NrdR-like_N"/>
</dbReference>
<dbReference type="InterPro" id="IPR003796">
    <property type="entry name" value="RNR_NrdR-like"/>
</dbReference>
<dbReference type="NCBIfam" id="TIGR00244">
    <property type="entry name" value="transcriptional regulator NrdR"/>
    <property type="match status" value="1"/>
</dbReference>
<dbReference type="PANTHER" id="PTHR30455">
    <property type="entry name" value="TRANSCRIPTIONAL REPRESSOR NRDR"/>
    <property type="match status" value="1"/>
</dbReference>
<dbReference type="PANTHER" id="PTHR30455:SF2">
    <property type="entry name" value="TRANSCRIPTIONAL REPRESSOR NRDR"/>
    <property type="match status" value="1"/>
</dbReference>
<dbReference type="Pfam" id="PF03477">
    <property type="entry name" value="ATP-cone"/>
    <property type="match status" value="1"/>
</dbReference>
<dbReference type="Pfam" id="PF22811">
    <property type="entry name" value="Zn_ribbon_NrdR"/>
    <property type="match status" value="1"/>
</dbReference>
<dbReference type="PROSITE" id="PS51161">
    <property type="entry name" value="ATP_CONE"/>
    <property type="match status" value="1"/>
</dbReference>
<proteinExistence type="inferred from homology"/>
<name>NRDR_DEIDV</name>
<accession>C1D0D5</accession>
<gene>
    <name evidence="1" type="primary">nrdR</name>
    <name type="ordered locus">Deide_04740</name>
</gene>
<protein>
    <recommendedName>
        <fullName evidence="1">Transcriptional repressor NrdR</fullName>
    </recommendedName>
</protein>
<keyword id="KW-0067">ATP-binding</keyword>
<keyword id="KW-0238">DNA-binding</keyword>
<keyword id="KW-0479">Metal-binding</keyword>
<keyword id="KW-0547">Nucleotide-binding</keyword>
<keyword id="KW-1185">Reference proteome</keyword>
<keyword id="KW-0678">Repressor</keyword>
<keyword id="KW-0804">Transcription</keyword>
<keyword id="KW-0805">Transcription regulation</keyword>
<keyword id="KW-0862">Zinc</keyword>
<keyword id="KW-0863">Zinc-finger</keyword>
<feature type="chain" id="PRO_1000206112" description="Transcriptional repressor NrdR">
    <location>
        <begin position="1"/>
        <end position="148"/>
    </location>
</feature>
<feature type="domain" description="ATP-cone" evidence="1">
    <location>
        <begin position="49"/>
        <end position="136"/>
    </location>
</feature>
<feature type="zinc finger region" evidence="1">
    <location>
        <begin position="3"/>
        <end position="34"/>
    </location>
</feature>
<feature type="region of interest" description="Disordered" evidence="2">
    <location>
        <begin position="1"/>
        <end position="22"/>
    </location>
</feature>
<sequence length="148" mass="16999">MKCPYCSAPDSKVVNSRPSDDGASIRRRRECLNCARRFTTYERAQLEPLMVVKRSGPREAFNPDKLLRGLTLATEKRPVDADALRAFAYGFEDDVQASEIHSEEIGKRAMTFLRPLDDVAYIRFASVYRDFDSLERFIEEIRGLKDQS</sequence>
<organism>
    <name type="scientific">Deinococcus deserti (strain DSM 17065 / CIP 109153 / LMG 22923 / VCD115)</name>
    <dbReference type="NCBI Taxonomy" id="546414"/>
    <lineage>
        <taxon>Bacteria</taxon>
        <taxon>Thermotogati</taxon>
        <taxon>Deinococcota</taxon>
        <taxon>Deinococci</taxon>
        <taxon>Deinococcales</taxon>
        <taxon>Deinococcaceae</taxon>
        <taxon>Deinococcus</taxon>
    </lineage>
</organism>
<evidence type="ECO:0000255" key="1">
    <source>
        <dbReference type="HAMAP-Rule" id="MF_00440"/>
    </source>
</evidence>
<evidence type="ECO:0000256" key="2">
    <source>
        <dbReference type="SAM" id="MobiDB-lite"/>
    </source>
</evidence>
<reference key="1">
    <citation type="journal article" date="2009" name="PLoS Genet.">
        <title>Alliance of proteomics and genomics to unravel the specificities of Sahara bacterium Deinococcus deserti.</title>
        <authorList>
            <person name="de Groot A."/>
            <person name="Dulermo R."/>
            <person name="Ortet P."/>
            <person name="Blanchard L."/>
            <person name="Guerin P."/>
            <person name="Fernandez B."/>
            <person name="Vacherie B."/>
            <person name="Dossat C."/>
            <person name="Jolivet E."/>
            <person name="Siguier P."/>
            <person name="Chandler M."/>
            <person name="Barakat M."/>
            <person name="Dedieu A."/>
            <person name="Barbe V."/>
            <person name="Heulin T."/>
            <person name="Sommer S."/>
            <person name="Achouak W."/>
            <person name="Armengaud J."/>
        </authorList>
    </citation>
    <scope>NUCLEOTIDE SEQUENCE [LARGE SCALE GENOMIC DNA]</scope>
    <source>
        <strain>DSM 17065 / CIP 109153 / LMG 22923 / VCD115</strain>
    </source>
</reference>
<comment type="function">
    <text evidence="1">Negatively regulates transcription of bacterial ribonucleotide reductase nrd genes and operons by binding to NrdR-boxes.</text>
</comment>
<comment type="cofactor">
    <cofactor evidence="1">
        <name>Zn(2+)</name>
        <dbReference type="ChEBI" id="CHEBI:29105"/>
    </cofactor>
    <text evidence="1">Binds 1 zinc ion.</text>
</comment>
<comment type="similarity">
    <text evidence="1">Belongs to the NrdR family.</text>
</comment>